<keyword id="KW-0472">Membrane</keyword>
<keyword id="KW-0520">NAD</keyword>
<keyword id="KW-0521">NADP</keyword>
<keyword id="KW-0618">Plastoquinone</keyword>
<keyword id="KW-0874">Quinone</keyword>
<keyword id="KW-0793">Thylakoid</keyword>
<keyword id="KW-1278">Translocase</keyword>
<keyword id="KW-0812">Transmembrane</keyword>
<keyword id="KW-1133">Transmembrane helix</keyword>
<keyword id="KW-0813">Transport</keyword>
<dbReference type="EC" id="7.1.1.-" evidence="1"/>
<dbReference type="EMBL" id="CP000117">
    <property type="protein sequence ID" value="ABA21773.1"/>
    <property type="molecule type" value="Genomic_DNA"/>
</dbReference>
<dbReference type="SMR" id="Q3MB63"/>
<dbReference type="STRING" id="240292.Ava_2153"/>
<dbReference type="KEGG" id="ava:Ava_2153"/>
<dbReference type="eggNOG" id="COG1007">
    <property type="taxonomic scope" value="Bacteria"/>
</dbReference>
<dbReference type="HOGENOM" id="CLU_007100_1_5_3"/>
<dbReference type="Proteomes" id="UP000002533">
    <property type="component" value="Chromosome"/>
</dbReference>
<dbReference type="GO" id="GO:0031676">
    <property type="term" value="C:plasma membrane-derived thylakoid membrane"/>
    <property type="evidence" value="ECO:0007669"/>
    <property type="project" value="UniProtKB-SubCell"/>
</dbReference>
<dbReference type="GO" id="GO:0008137">
    <property type="term" value="F:NADH dehydrogenase (ubiquinone) activity"/>
    <property type="evidence" value="ECO:0007669"/>
    <property type="project" value="InterPro"/>
</dbReference>
<dbReference type="GO" id="GO:0048038">
    <property type="term" value="F:quinone binding"/>
    <property type="evidence" value="ECO:0007669"/>
    <property type="project" value="UniProtKB-KW"/>
</dbReference>
<dbReference type="GO" id="GO:0042773">
    <property type="term" value="P:ATP synthesis coupled electron transport"/>
    <property type="evidence" value="ECO:0007669"/>
    <property type="project" value="InterPro"/>
</dbReference>
<dbReference type="GO" id="GO:0019684">
    <property type="term" value="P:photosynthesis, light reaction"/>
    <property type="evidence" value="ECO:0007669"/>
    <property type="project" value="UniProtKB-UniRule"/>
</dbReference>
<dbReference type="HAMAP" id="MF_00445">
    <property type="entry name" value="NDH1_NuoN_1"/>
    <property type="match status" value="1"/>
</dbReference>
<dbReference type="InterPro" id="IPR010096">
    <property type="entry name" value="NADH-Q_OxRdtase_suN/2"/>
</dbReference>
<dbReference type="InterPro" id="IPR001750">
    <property type="entry name" value="ND/Mrp_TM"/>
</dbReference>
<dbReference type="InterPro" id="IPR045693">
    <property type="entry name" value="Ndh2_N"/>
</dbReference>
<dbReference type="NCBIfam" id="TIGR01770">
    <property type="entry name" value="NDH_I_N"/>
    <property type="match status" value="1"/>
</dbReference>
<dbReference type="NCBIfam" id="NF002701">
    <property type="entry name" value="PRK02504.1"/>
    <property type="match status" value="1"/>
</dbReference>
<dbReference type="PANTHER" id="PTHR22773">
    <property type="entry name" value="NADH DEHYDROGENASE"/>
    <property type="match status" value="1"/>
</dbReference>
<dbReference type="Pfam" id="PF19530">
    <property type="entry name" value="Ndh2_N"/>
    <property type="match status" value="1"/>
</dbReference>
<dbReference type="Pfam" id="PF00361">
    <property type="entry name" value="Proton_antipo_M"/>
    <property type="match status" value="1"/>
</dbReference>
<dbReference type="PRINTS" id="PR01434">
    <property type="entry name" value="NADHDHGNASE5"/>
</dbReference>
<protein>
    <recommendedName>
        <fullName evidence="1">NAD(P)H-quinone oxidoreductase subunit 2</fullName>
        <ecNumber evidence="1">7.1.1.-</ecNumber>
    </recommendedName>
    <alternativeName>
        <fullName evidence="1">NAD(P)H dehydrogenase subunit 2</fullName>
    </alternativeName>
    <alternativeName>
        <fullName evidence="1">NADH-plastoquinone oxidoreductase subunit 2</fullName>
    </alternativeName>
    <alternativeName>
        <fullName evidence="1">NDH-1, subunit 2</fullName>
    </alternativeName>
</protein>
<evidence type="ECO:0000255" key="1">
    <source>
        <dbReference type="HAMAP-Rule" id="MF_00445"/>
    </source>
</evidence>
<sequence length="520" mass="55443">MDFANLAAQLNAGTILPEGIVIVTLMGVLIVDLILGRTSSRWIGYLAIAGLLAAIVALYFQWDATNPISFTGGFIGDDLSIIFRGIIALSAVVTILMSIRYVEQSGTALAEFIAILLTATLGGMFVSGASELVMIFISLETLSISSYLLTGYTKRDPRSNEAALKYLLIGASSTAVFLYGVSLLYGLSGGQTELSAIANGIITANVGQSLGAVIALVFVIAGIGFKISAAPFHQWTPDVYEGAPTPVIAFLSVGSKAAGFALAIRLLTTVFPFVAEEWKFVFTALAVLSMILGNVVALAQTSMKRMLAYSSIAQAGFVMIGLIAGTDAGYASMIFYLLVYLFMNLCGFTCIILFSLRTGTDQIAEYSGLYQKDPLLTLGLSISLLSLGGIPPLAGFFGKIYLFWAGWQAGLYWLVLLGLVTSVVSIYYYIRVVKMMVVKEPQEMSDVVKNYPEIRWNLPGFRPLQVGLVLTLIATSVAGILSNPLFTLANNSVANTAILQTTKVVSTQVSAIPAEKSEGL</sequence>
<accession>Q3MB63</accession>
<reference key="1">
    <citation type="journal article" date="2014" name="Stand. Genomic Sci.">
        <title>Complete genome sequence of Anabaena variabilis ATCC 29413.</title>
        <authorList>
            <person name="Thiel T."/>
            <person name="Pratte B.S."/>
            <person name="Zhong J."/>
            <person name="Goodwin L."/>
            <person name="Copeland A."/>
            <person name="Lucas S."/>
            <person name="Han C."/>
            <person name="Pitluck S."/>
            <person name="Land M.L."/>
            <person name="Kyrpides N.C."/>
            <person name="Woyke T."/>
        </authorList>
    </citation>
    <scope>NUCLEOTIDE SEQUENCE [LARGE SCALE GENOMIC DNA]</scope>
    <source>
        <strain>ATCC 29413 / PCC 7937</strain>
    </source>
</reference>
<proteinExistence type="inferred from homology"/>
<comment type="function">
    <text evidence="1">NDH-1 shuttles electrons from an unknown electron donor, via FMN and iron-sulfur (Fe-S) centers, to quinones in the respiratory and/or the photosynthetic chain. The immediate electron acceptor for the enzyme in this species is believed to be plastoquinone. Couples the redox reaction to proton translocation, and thus conserves the redox energy in a proton gradient. Cyanobacterial NDH-1 also plays a role in inorganic carbon-concentration.</text>
</comment>
<comment type="catalytic activity">
    <reaction evidence="1">
        <text>a plastoquinone + NADH + (n+1) H(+)(in) = a plastoquinol + NAD(+) + n H(+)(out)</text>
        <dbReference type="Rhea" id="RHEA:42608"/>
        <dbReference type="Rhea" id="RHEA-COMP:9561"/>
        <dbReference type="Rhea" id="RHEA-COMP:9562"/>
        <dbReference type="ChEBI" id="CHEBI:15378"/>
        <dbReference type="ChEBI" id="CHEBI:17757"/>
        <dbReference type="ChEBI" id="CHEBI:57540"/>
        <dbReference type="ChEBI" id="CHEBI:57945"/>
        <dbReference type="ChEBI" id="CHEBI:62192"/>
    </reaction>
</comment>
<comment type="catalytic activity">
    <reaction evidence="1">
        <text>a plastoquinone + NADPH + (n+1) H(+)(in) = a plastoquinol + NADP(+) + n H(+)(out)</text>
        <dbReference type="Rhea" id="RHEA:42612"/>
        <dbReference type="Rhea" id="RHEA-COMP:9561"/>
        <dbReference type="Rhea" id="RHEA-COMP:9562"/>
        <dbReference type="ChEBI" id="CHEBI:15378"/>
        <dbReference type="ChEBI" id="CHEBI:17757"/>
        <dbReference type="ChEBI" id="CHEBI:57783"/>
        <dbReference type="ChEBI" id="CHEBI:58349"/>
        <dbReference type="ChEBI" id="CHEBI:62192"/>
    </reaction>
</comment>
<comment type="subunit">
    <text evidence="1">NDH-1 can be composed of about 15 different subunits; different subcomplexes with different compositions have been identified which probably have different functions.</text>
</comment>
<comment type="subcellular location">
    <subcellularLocation>
        <location evidence="1">Cellular thylakoid membrane</location>
        <topology evidence="1">Multi-pass membrane protein</topology>
    </subcellularLocation>
</comment>
<comment type="similarity">
    <text evidence="1">Belongs to the complex I subunit 2 family.</text>
</comment>
<gene>
    <name evidence="1" type="primary">ndhB</name>
    <name type="ordered locus">Ava_2153</name>
</gene>
<feature type="chain" id="PRO_1000026149" description="NAD(P)H-quinone oxidoreductase subunit 2">
    <location>
        <begin position="1"/>
        <end position="520"/>
    </location>
</feature>
<feature type="transmembrane region" description="Helical" evidence="1">
    <location>
        <begin position="15"/>
        <end position="35"/>
    </location>
</feature>
<feature type="transmembrane region" description="Helical" evidence="1">
    <location>
        <begin position="42"/>
        <end position="62"/>
    </location>
</feature>
<feature type="transmembrane region" description="Helical" evidence="1">
    <location>
        <begin position="79"/>
        <end position="99"/>
    </location>
</feature>
<feature type="transmembrane region" description="Helical" evidence="1">
    <location>
        <begin position="106"/>
        <end position="126"/>
    </location>
</feature>
<feature type="transmembrane region" description="Helical" evidence="1">
    <location>
        <begin position="132"/>
        <end position="152"/>
    </location>
</feature>
<feature type="transmembrane region" description="Helical" evidence="1">
    <location>
        <begin position="167"/>
        <end position="187"/>
    </location>
</feature>
<feature type="transmembrane region" description="Helical" evidence="1">
    <location>
        <begin position="210"/>
        <end position="230"/>
    </location>
</feature>
<feature type="transmembrane region" description="Helical" evidence="1">
    <location>
        <begin position="244"/>
        <end position="264"/>
    </location>
</feature>
<feature type="transmembrane region" description="Helical" evidence="1">
    <location>
        <begin position="280"/>
        <end position="300"/>
    </location>
</feature>
<feature type="transmembrane region" description="Helical" evidence="1">
    <location>
        <begin position="306"/>
        <end position="326"/>
    </location>
</feature>
<feature type="transmembrane region" description="Helical" evidence="1">
    <location>
        <begin position="334"/>
        <end position="354"/>
    </location>
</feature>
<feature type="transmembrane region" description="Helical" evidence="1">
    <location>
        <begin position="378"/>
        <end position="398"/>
    </location>
</feature>
<feature type="transmembrane region" description="Helical" evidence="1">
    <location>
        <begin position="400"/>
        <end position="420"/>
    </location>
</feature>
<feature type="transmembrane region" description="Helical" evidence="1">
    <location>
        <begin position="466"/>
        <end position="486"/>
    </location>
</feature>
<name>NU2C_TRIV2</name>
<organism>
    <name type="scientific">Trichormus variabilis (strain ATCC 29413 / PCC 7937)</name>
    <name type="common">Anabaena variabilis</name>
    <dbReference type="NCBI Taxonomy" id="240292"/>
    <lineage>
        <taxon>Bacteria</taxon>
        <taxon>Bacillati</taxon>
        <taxon>Cyanobacteriota</taxon>
        <taxon>Cyanophyceae</taxon>
        <taxon>Nostocales</taxon>
        <taxon>Nostocaceae</taxon>
        <taxon>Trichormus</taxon>
    </lineage>
</organism>